<keyword id="KW-0186">Copper</keyword>
<keyword id="KW-1015">Disulfide bond</keyword>
<keyword id="KW-0325">Glycoprotein</keyword>
<keyword id="KW-0439">Lignin degradation</keyword>
<keyword id="KW-0470">Melanin biosynthesis</keyword>
<keyword id="KW-0479">Metal-binding</keyword>
<keyword id="KW-0560">Oxidoreductase</keyword>
<keyword id="KW-0677">Repeat</keyword>
<keyword id="KW-0964">Secreted</keyword>
<keyword id="KW-0732">Signal</keyword>
<sequence length="621" mass="68129">MMKSFFSAAALLLGLVAPSAVLAAPSLPGVPREVTRDLLRPVEERQSSCHTAANRACWAPGFDINTDYEVSTPNTGVTRTYTLTLTEVDNWLGPDGVVKQKVMLVNGDIFGPTITANWGDWIQVNVINNLRTNGTSIHWHGLHQKGTNMHDGANGVTECPIPPKGGSRIYRFRAQQYGTSWYHSHFSAQYGNGVVGTIVVNGPASVPYDIDLGVFPITDYYHKPADVLVEETMNGGPPPSDTVLFKGHGKNPQTGAGKFANVTLTPGKRHRLRIINTSTHDHFQLKLQNHTMTIIAADMVPVQAQTVDSLFLAVGQRYDVTIDANKSVGNYWFNATFGGGLACGASLNPHPAAVFRYQGAPNTLPTNIGTPAADANCMDLNNLTPVVSRSVPTSGFTPRPNNTLPVSLTLGGTPLFVWKVNGSSINVDWDKPIVDYVIAQNTSYPPQANVITVNSVNQWTYWLIENDPTGPFSIPHPMHLHGHDFLVVGRSPDQPAGVPQTRYRFNPATDMALLKSSNPVRRDVAMLPANGWLLIAFKSDNPGAWLFHCHIAWHVSGGLSVQYLERPNDLRNGFSQADKNQHNNNCNAWRAYWPTNPFPKIDSGLKVKKWVGEHPDWYIKN</sequence>
<accession>P78722</accession>
<dbReference type="EC" id="1.10.3.2" evidence="2"/>
<dbReference type="EMBL" id="Y08827">
    <property type="protein sequence ID" value="CAA70061.1"/>
    <property type="molecule type" value="Genomic_DNA"/>
</dbReference>
<dbReference type="PIR" id="S72493">
    <property type="entry name" value="S72493"/>
</dbReference>
<dbReference type="SMR" id="P78722"/>
<dbReference type="CAZy" id="AA1">
    <property type="family name" value="Auxiliary Activities 1"/>
</dbReference>
<dbReference type="GlyCosmos" id="P78722">
    <property type="glycosylation" value="9 sites, No reported glycans"/>
</dbReference>
<dbReference type="VEuPathDB" id="FungiDB:PODANS_5_1200"/>
<dbReference type="GO" id="GO:0005576">
    <property type="term" value="C:extracellular region"/>
    <property type="evidence" value="ECO:0007669"/>
    <property type="project" value="UniProtKB-SubCell"/>
</dbReference>
<dbReference type="GO" id="GO:0005507">
    <property type="term" value="F:copper ion binding"/>
    <property type="evidence" value="ECO:0007669"/>
    <property type="project" value="InterPro"/>
</dbReference>
<dbReference type="GO" id="GO:0052716">
    <property type="term" value="F:hydroquinone:oxygen oxidoreductase activity"/>
    <property type="evidence" value="ECO:0007669"/>
    <property type="project" value="UniProtKB-EC"/>
</dbReference>
<dbReference type="GO" id="GO:0046274">
    <property type="term" value="P:lignin catabolic process"/>
    <property type="evidence" value="ECO:0007669"/>
    <property type="project" value="UniProtKB-KW"/>
</dbReference>
<dbReference type="GO" id="GO:0042438">
    <property type="term" value="P:melanin biosynthetic process"/>
    <property type="evidence" value="ECO:0007669"/>
    <property type="project" value="UniProtKB-KW"/>
</dbReference>
<dbReference type="CDD" id="cd13854">
    <property type="entry name" value="CuRO_1_MaLCC_like"/>
    <property type="match status" value="1"/>
</dbReference>
<dbReference type="CDD" id="cd13880">
    <property type="entry name" value="CuRO_2_MaLCC_like"/>
    <property type="match status" value="1"/>
</dbReference>
<dbReference type="CDD" id="cd13901">
    <property type="entry name" value="CuRO_3_MaLCC_like"/>
    <property type="match status" value="1"/>
</dbReference>
<dbReference type="FunFam" id="2.60.40.420:FF:000021">
    <property type="entry name" value="Extracellular dihydrogeodin oxidase/laccase"/>
    <property type="match status" value="1"/>
</dbReference>
<dbReference type="FunFam" id="2.60.40.420:FF:000045">
    <property type="entry name" value="Laccase 2"/>
    <property type="match status" value="1"/>
</dbReference>
<dbReference type="FunFam" id="2.60.40.420:FF:000046">
    <property type="entry name" value="Multicopper oxidase"/>
    <property type="match status" value="1"/>
</dbReference>
<dbReference type="Gene3D" id="2.60.40.420">
    <property type="entry name" value="Cupredoxins - blue copper proteins"/>
    <property type="match status" value="3"/>
</dbReference>
<dbReference type="InterPro" id="IPR011707">
    <property type="entry name" value="Cu-oxidase-like_N"/>
</dbReference>
<dbReference type="InterPro" id="IPR001117">
    <property type="entry name" value="Cu-oxidase_2nd"/>
</dbReference>
<dbReference type="InterPro" id="IPR011706">
    <property type="entry name" value="Cu-oxidase_C"/>
</dbReference>
<dbReference type="InterPro" id="IPR045087">
    <property type="entry name" value="Cu-oxidase_fam"/>
</dbReference>
<dbReference type="InterPro" id="IPR033138">
    <property type="entry name" value="Cu_oxidase_CS"/>
</dbReference>
<dbReference type="InterPro" id="IPR002355">
    <property type="entry name" value="Cu_oxidase_Cu_BS"/>
</dbReference>
<dbReference type="InterPro" id="IPR008972">
    <property type="entry name" value="Cupredoxin"/>
</dbReference>
<dbReference type="PANTHER" id="PTHR11709:SF87">
    <property type="entry name" value="LACCASE"/>
    <property type="match status" value="1"/>
</dbReference>
<dbReference type="PANTHER" id="PTHR11709">
    <property type="entry name" value="MULTI-COPPER OXIDASE"/>
    <property type="match status" value="1"/>
</dbReference>
<dbReference type="Pfam" id="PF00394">
    <property type="entry name" value="Cu-oxidase"/>
    <property type="match status" value="1"/>
</dbReference>
<dbReference type="Pfam" id="PF07731">
    <property type="entry name" value="Cu-oxidase_2"/>
    <property type="match status" value="1"/>
</dbReference>
<dbReference type="Pfam" id="PF07732">
    <property type="entry name" value="Cu-oxidase_3"/>
    <property type="match status" value="1"/>
</dbReference>
<dbReference type="SUPFAM" id="SSF49503">
    <property type="entry name" value="Cupredoxins"/>
    <property type="match status" value="3"/>
</dbReference>
<dbReference type="PROSITE" id="PS00079">
    <property type="entry name" value="MULTICOPPER_OXIDASE1"/>
    <property type="match status" value="1"/>
</dbReference>
<dbReference type="PROSITE" id="PS00080">
    <property type="entry name" value="MULTICOPPER_OXIDASE2"/>
    <property type="match status" value="1"/>
</dbReference>
<feature type="signal peptide" evidence="3">
    <location>
        <begin position="1"/>
        <end position="23"/>
    </location>
</feature>
<feature type="propeptide" id="PRO_0000002931" evidence="3">
    <location>
        <begin position="24"/>
        <end position="48"/>
    </location>
</feature>
<feature type="chain" id="PRO_0000002932" description="Laccase-2">
    <location>
        <begin position="49"/>
        <end position="605"/>
    </location>
</feature>
<feature type="propeptide" id="PRO_0000002933" evidence="3">
    <location>
        <begin position="606"/>
        <end position="621"/>
    </location>
</feature>
<feature type="domain" description="Plastocyanin-like 1">
    <location>
        <begin position="78"/>
        <end position="201"/>
    </location>
</feature>
<feature type="domain" description="Plastocyanin-like 2">
    <location>
        <begin position="210"/>
        <end position="367"/>
    </location>
</feature>
<feature type="domain" description="Plastocyanin-like 3">
    <location>
        <begin position="430"/>
        <end position="566"/>
    </location>
</feature>
<feature type="binding site" description="type 2 copper site" evidence="1">
    <location>
        <position position="138"/>
    </location>
    <ligand>
        <name>Cu cation</name>
        <dbReference type="ChEBI" id="CHEBI:23378"/>
        <label>1</label>
    </ligand>
</feature>
<feature type="binding site" description="type 3 copper site" evidence="1">
    <location>
        <position position="140"/>
    </location>
    <ligand>
        <name>Cu cation</name>
        <dbReference type="ChEBI" id="CHEBI:23378"/>
        <label>2</label>
    </ligand>
</feature>
<feature type="binding site" description="type 3 copper site" evidence="1">
    <location>
        <position position="183"/>
    </location>
    <ligand>
        <name>Cu cation</name>
        <dbReference type="ChEBI" id="CHEBI:23378"/>
        <label>2</label>
    </ligand>
</feature>
<feature type="binding site" description="type 3 copper site" evidence="1">
    <location>
        <position position="185"/>
    </location>
    <ligand>
        <name>Cu cation</name>
        <dbReference type="ChEBI" id="CHEBI:23378"/>
        <label>3</label>
    </ligand>
</feature>
<feature type="binding site" description="type 1 copper site" evidence="1">
    <location>
        <position position="476"/>
    </location>
    <ligand>
        <name>Cu cation</name>
        <dbReference type="ChEBI" id="CHEBI:23378"/>
        <label>4</label>
    </ligand>
</feature>
<feature type="binding site" description="type 2 copper site" evidence="1">
    <location>
        <position position="479"/>
    </location>
    <ligand>
        <name>Cu cation</name>
        <dbReference type="ChEBI" id="CHEBI:23378"/>
        <label>1</label>
    </ligand>
</feature>
<feature type="binding site" description="type 3 copper site" evidence="1">
    <location>
        <position position="481"/>
    </location>
    <ligand>
        <name>Cu cation</name>
        <dbReference type="ChEBI" id="CHEBI:23378"/>
        <label>3</label>
    </ligand>
</feature>
<feature type="binding site" description="type 3 copper site" evidence="1">
    <location>
        <position position="548"/>
    </location>
    <ligand>
        <name>Cu cation</name>
        <dbReference type="ChEBI" id="CHEBI:23378"/>
        <label>3</label>
    </ligand>
</feature>
<feature type="binding site" description="type 1 copper site" evidence="1">
    <location>
        <position position="549"/>
    </location>
    <ligand>
        <name>Cu cation</name>
        <dbReference type="ChEBI" id="CHEBI:23378"/>
        <label>4</label>
    </ligand>
</feature>
<feature type="binding site" description="type 3 copper site" evidence="1">
    <location>
        <position position="550"/>
    </location>
    <ligand>
        <name>Cu cation</name>
        <dbReference type="ChEBI" id="CHEBI:23378"/>
        <label>2</label>
    </ligand>
</feature>
<feature type="binding site" description="type 1 copper site" evidence="1">
    <location>
        <position position="554"/>
    </location>
    <ligand>
        <name>Cu cation</name>
        <dbReference type="ChEBI" id="CHEBI:23378"/>
        <label>4</label>
    </ligand>
</feature>
<feature type="glycosylation site" description="N-linked (GlcNAc...) asparagine" evidence="3">
    <location>
        <position position="133"/>
    </location>
</feature>
<feature type="glycosylation site" description="N-linked (GlcNAc...) asparagine" evidence="3">
    <location>
        <position position="261"/>
    </location>
</feature>
<feature type="glycosylation site" description="N-linked (GlcNAc...) asparagine" evidence="3">
    <location>
        <position position="276"/>
    </location>
</feature>
<feature type="glycosylation site" description="N-linked (GlcNAc...) asparagine" evidence="3">
    <location>
        <position position="289"/>
    </location>
</feature>
<feature type="glycosylation site" description="N-linked (GlcNAc...) asparagine" evidence="3">
    <location>
        <position position="325"/>
    </location>
</feature>
<feature type="glycosylation site" description="N-linked (GlcNAc...) asparagine" evidence="3">
    <location>
        <position position="334"/>
    </location>
</feature>
<feature type="glycosylation site" description="N-linked (GlcNAc...) asparagine" evidence="3">
    <location>
        <position position="401"/>
    </location>
</feature>
<feature type="glycosylation site" description="N-linked (GlcNAc...) asparagine" evidence="3">
    <location>
        <position position="421"/>
    </location>
</feature>
<feature type="glycosylation site" description="N-linked (GlcNAc...) asparagine" evidence="3">
    <location>
        <position position="441"/>
    </location>
</feature>
<feature type="disulfide bond" evidence="2">
    <location>
        <begin position="49"/>
        <end position="57"/>
    </location>
</feature>
<feature type="disulfide bond" evidence="2">
    <location>
        <begin position="159"/>
        <end position="586"/>
    </location>
</feature>
<feature type="disulfide bond" evidence="2">
    <location>
        <begin position="343"/>
        <end position="377"/>
    </location>
</feature>
<comment type="function">
    <text evidence="5">Probably involved in lignin degradation and in the detoxification of lignin-derived products in its natural habitat (herbivorous dung), which is rich in lignin of grasses and straw. Probably involved in melanin synthesis and in perithecia development.</text>
</comment>
<comment type="catalytic activity">
    <reaction evidence="2">
        <text>4 hydroquinone + O2 = 4 benzosemiquinone + 2 H2O</text>
        <dbReference type="Rhea" id="RHEA:11276"/>
        <dbReference type="ChEBI" id="CHEBI:15377"/>
        <dbReference type="ChEBI" id="CHEBI:15379"/>
        <dbReference type="ChEBI" id="CHEBI:17594"/>
        <dbReference type="ChEBI" id="CHEBI:17977"/>
        <dbReference type="EC" id="1.10.3.2"/>
    </reaction>
</comment>
<comment type="cofactor">
    <cofactor evidence="2">
        <name>Cu cation</name>
        <dbReference type="ChEBI" id="CHEBI:23378"/>
    </cofactor>
    <text evidence="2">Binds 4 Cu cations per monomer.</text>
</comment>
<comment type="subunit">
    <text evidence="2">Monomer.</text>
</comment>
<comment type="subcellular location">
    <subcellularLocation>
        <location evidence="2">Secreted</location>
    </subcellularLocation>
</comment>
<comment type="developmental stage">
    <text evidence="4">Low basic levels throughout the growth phase; increases at least 20-fold at the beginning of the autolytic phase and decreases again thereafter.</text>
</comment>
<comment type="induction">
    <text evidence="4">Under oxidative stress on the mycelium by aromatic xenobiotics (guaiacol, hydroquinone, benzoquinone), and by copper salt at a concentration of 1 mM (growing mycelium).</text>
</comment>
<comment type="PTM">
    <text>Proteolytically processed at both its N-terminus and its C-terminus.</text>
</comment>
<comment type="miscellaneous">
    <text>Podospora anserina contains at least 3 laccase isozymes named I, II, and III. They differ in their substrate specificity, number of subunits, isoelectronic point and heat stability.</text>
</comment>
<comment type="similarity">
    <text evidence="6">Belongs to the multicopper oxidase family.</text>
</comment>
<organism>
    <name type="scientific">Podospora anserina</name>
    <name type="common">Pleurage anserina</name>
    <dbReference type="NCBI Taxonomy" id="2587412"/>
    <lineage>
        <taxon>Eukaryota</taxon>
        <taxon>Fungi</taxon>
        <taxon>Dikarya</taxon>
        <taxon>Ascomycota</taxon>
        <taxon>Pezizomycotina</taxon>
        <taxon>Sordariomycetes</taxon>
        <taxon>Sordariomycetidae</taxon>
        <taxon>Sordariales</taxon>
        <taxon>Podosporaceae</taxon>
        <taxon>Podospora</taxon>
    </lineage>
</organism>
<gene>
    <name type="primary">LAC2</name>
</gene>
<evidence type="ECO:0000250" key="1">
    <source>
        <dbReference type="UniProtKB" id="D0VWU3"/>
    </source>
</evidence>
<evidence type="ECO:0000250" key="2">
    <source>
        <dbReference type="UniProtKB" id="Q70KY3"/>
    </source>
</evidence>
<evidence type="ECO:0000255" key="3"/>
<evidence type="ECO:0000269" key="4">
    <source>
    </source>
</evidence>
<evidence type="ECO:0000303" key="5">
    <source>
    </source>
</evidence>
<evidence type="ECO:0000305" key="6"/>
<proteinExistence type="evidence at transcript level"/>
<reference key="1">
    <citation type="journal article" date="1996" name="Mol. Gen. Genet.">
        <title>Isolation and characterization of a laccase gene from Podospora anserina.</title>
        <authorList>
            <person name="Fernandez-Larrea J."/>
            <person name="Stahl U."/>
        </authorList>
    </citation>
    <scope>NUCLEOTIDE SEQUENCE [GENOMIC DNA]</scope>
    <scope>FUNCTION</scope>
    <scope>DEVELOPMENTAL STAGE</scope>
    <scope>INDUCTION</scope>
    <source>
        <strain>ATCC 26003</strain>
    </source>
</reference>
<name>LAC2_PODAS</name>
<protein>
    <recommendedName>
        <fullName>Laccase-2</fullName>
        <ecNumber evidence="2">1.10.3.2</ecNumber>
    </recommendedName>
    <alternativeName>
        <fullName>Benzenediol:oxygen oxidoreductase 2</fullName>
    </alternativeName>
    <alternativeName>
        <fullName>Diphenol oxidase 2</fullName>
    </alternativeName>
    <alternativeName>
        <fullName>Laccase C</fullName>
    </alternativeName>
    <alternativeName>
        <fullName>Laccase II</fullName>
    </alternativeName>
    <alternativeName>
        <fullName>Urishiol oxidase 2</fullName>
    </alternativeName>
</protein>